<reference key="1">
    <citation type="journal article" date="2005" name="Science">
        <title>The transcriptional landscape of the mammalian genome.</title>
        <authorList>
            <person name="Carninci P."/>
            <person name="Kasukawa T."/>
            <person name="Katayama S."/>
            <person name="Gough J."/>
            <person name="Frith M.C."/>
            <person name="Maeda N."/>
            <person name="Oyama R."/>
            <person name="Ravasi T."/>
            <person name="Lenhard B."/>
            <person name="Wells C."/>
            <person name="Kodzius R."/>
            <person name="Shimokawa K."/>
            <person name="Bajic V.B."/>
            <person name="Brenner S.E."/>
            <person name="Batalov S."/>
            <person name="Forrest A.R."/>
            <person name="Zavolan M."/>
            <person name="Davis M.J."/>
            <person name="Wilming L.G."/>
            <person name="Aidinis V."/>
            <person name="Allen J.E."/>
            <person name="Ambesi-Impiombato A."/>
            <person name="Apweiler R."/>
            <person name="Aturaliya R.N."/>
            <person name="Bailey T.L."/>
            <person name="Bansal M."/>
            <person name="Baxter L."/>
            <person name="Beisel K.W."/>
            <person name="Bersano T."/>
            <person name="Bono H."/>
            <person name="Chalk A.M."/>
            <person name="Chiu K.P."/>
            <person name="Choudhary V."/>
            <person name="Christoffels A."/>
            <person name="Clutterbuck D.R."/>
            <person name="Crowe M.L."/>
            <person name="Dalla E."/>
            <person name="Dalrymple B.P."/>
            <person name="de Bono B."/>
            <person name="Della Gatta G."/>
            <person name="di Bernardo D."/>
            <person name="Down T."/>
            <person name="Engstrom P."/>
            <person name="Fagiolini M."/>
            <person name="Faulkner G."/>
            <person name="Fletcher C.F."/>
            <person name="Fukushima T."/>
            <person name="Furuno M."/>
            <person name="Futaki S."/>
            <person name="Gariboldi M."/>
            <person name="Georgii-Hemming P."/>
            <person name="Gingeras T.R."/>
            <person name="Gojobori T."/>
            <person name="Green R.E."/>
            <person name="Gustincich S."/>
            <person name="Harbers M."/>
            <person name="Hayashi Y."/>
            <person name="Hensch T.K."/>
            <person name="Hirokawa N."/>
            <person name="Hill D."/>
            <person name="Huminiecki L."/>
            <person name="Iacono M."/>
            <person name="Ikeo K."/>
            <person name="Iwama A."/>
            <person name="Ishikawa T."/>
            <person name="Jakt M."/>
            <person name="Kanapin A."/>
            <person name="Katoh M."/>
            <person name="Kawasawa Y."/>
            <person name="Kelso J."/>
            <person name="Kitamura H."/>
            <person name="Kitano H."/>
            <person name="Kollias G."/>
            <person name="Krishnan S.P."/>
            <person name="Kruger A."/>
            <person name="Kummerfeld S.K."/>
            <person name="Kurochkin I.V."/>
            <person name="Lareau L.F."/>
            <person name="Lazarevic D."/>
            <person name="Lipovich L."/>
            <person name="Liu J."/>
            <person name="Liuni S."/>
            <person name="McWilliam S."/>
            <person name="Madan Babu M."/>
            <person name="Madera M."/>
            <person name="Marchionni L."/>
            <person name="Matsuda H."/>
            <person name="Matsuzawa S."/>
            <person name="Miki H."/>
            <person name="Mignone F."/>
            <person name="Miyake S."/>
            <person name="Morris K."/>
            <person name="Mottagui-Tabar S."/>
            <person name="Mulder N."/>
            <person name="Nakano N."/>
            <person name="Nakauchi H."/>
            <person name="Ng P."/>
            <person name="Nilsson R."/>
            <person name="Nishiguchi S."/>
            <person name="Nishikawa S."/>
            <person name="Nori F."/>
            <person name="Ohara O."/>
            <person name="Okazaki Y."/>
            <person name="Orlando V."/>
            <person name="Pang K.C."/>
            <person name="Pavan W.J."/>
            <person name="Pavesi G."/>
            <person name="Pesole G."/>
            <person name="Petrovsky N."/>
            <person name="Piazza S."/>
            <person name="Reed J."/>
            <person name="Reid J.F."/>
            <person name="Ring B.Z."/>
            <person name="Ringwald M."/>
            <person name="Rost B."/>
            <person name="Ruan Y."/>
            <person name="Salzberg S.L."/>
            <person name="Sandelin A."/>
            <person name="Schneider C."/>
            <person name="Schoenbach C."/>
            <person name="Sekiguchi K."/>
            <person name="Semple C.A."/>
            <person name="Seno S."/>
            <person name="Sessa L."/>
            <person name="Sheng Y."/>
            <person name="Shibata Y."/>
            <person name="Shimada H."/>
            <person name="Shimada K."/>
            <person name="Silva D."/>
            <person name="Sinclair B."/>
            <person name="Sperling S."/>
            <person name="Stupka E."/>
            <person name="Sugiura K."/>
            <person name="Sultana R."/>
            <person name="Takenaka Y."/>
            <person name="Taki K."/>
            <person name="Tammoja K."/>
            <person name="Tan S.L."/>
            <person name="Tang S."/>
            <person name="Taylor M.S."/>
            <person name="Tegner J."/>
            <person name="Teichmann S.A."/>
            <person name="Ueda H.R."/>
            <person name="van Nimwegen E."/>
            <person name="Verardo R."/>
            <person name="Wei C.L."/>
            <person name="Yagi K."/>
            <person name="Yamanishi H."/>
            <person name="Zabarovsky E."/>
            <person name="Zhu S."/>
            <person name="Zimmer A."/>
            <person name="Hide W."/>
            <person name="Bult C."/>
            <person name="Grimmond S.M."/>
            <person name="Teasdale R.D."/>
            <person name="Liu E.T."/>
            <person name="Brusic V."/>
            <person name="Quackenbush J."/>
            <person name="Wahlestedt C."/>
            <person name="Mattick J.S."/>
            <person name="Hume D.A."/>
            <person name="Kai C."/>
            <person name="Sasaki D."/>
            <person name="Tomaru Y."/>
            <person name="Fukuda S."/>
            <person name="Kanamori-Katayama M."/>
            <person name="Suzuki M."/>
            <person name="Aoki J."/>
            <person name="Arakawa T."/>
            <person name="Iida J."/>
            <person name="Imamura K."/>
            <person name="Itoh M."/>
            <person name="Kato T."/>
            <person name="Kawaji H."/>
            <person name="Kawagashira N."/>
            <person name="Kawashima T."/>
            <person name="Kojima M."/>
            <person name="Kondo S."/>
            <person name="Konno H."/>
            <person name="Nakano K."/>
            <person name="Ninomiya N."/>
            <person name="Nishio T."/>
            <person name="Okada M."/>
            <person name="Plessy C."/>
            <person name="Shibata K."/>
            <person name="Shiraki T."/>
            <person name="Suzuki S."/>
            <person name="Tagami M."/>
            <person name="Waki K."/>
            <person name="Watahiki A."/>
            <person name="Okamura-Oho Y."/>
            <person name="Suzuki H."/>
            <person name="Kawai J."/>
            <person name="Hayashizaki Y."/>
        </authorList>
    </citation>
    <scope>NUCLEOTIDE SEQUENCE [LARGE SCALE MRNA]</scope>
    <source>
        <strain>C57BL/6J</strain>
        <tissue>Cerebellum</tissue>
    </source>
</reference>
<reference key="2">
    <citation type="journal article" date="2009" name="PLoS Biol.">
        <title>Lineage-specific biology revealed by a finished genome assembly of the mouse.</title>
        <authorList>
            <person name="Church D.M."/>
            <person name="Goodstadt L."/>
            <person name="Hillier L.W."/>
            <person name="Zody M.C."/>
            <person name="Goldstein S."/>
            <person name="She X."/>
            <person name="Bult C.J."/>
            <person name="Agarwala R."/>
            <person name="Cherry J.L."/>
            <person name="DiCuccio M."/>
            <person name="Hlavina W."/>
            <person name="Kapustin Y."/>
            <person name="Meric P."/>
            <person name="Maglott D."/>
            <person name="Birtle Z."/>
            <person name="Marques A.C."/>
            <person name="Graves T."/>
            <person name="Zhou S."/>
            <person name="Teague B."/>
            <person name="Potamousis K."/>
            <person name="Churas C."/>
            <person name="Place M."/>
            <person name="Herschleb J."/>
            <person name="Runnheim R."/>
            <person name="Forrest D."/>
            <person name="Amos-Landgraf J."/>
            <person name="Schwartz D.C."/>
            <person name="Cheng Z."/>
            <person name="Lindblad-Toh K."/>
            <person name="Eichler E.E."/>
            <person name="Ponting C.P."/>
        </authorList>
    </citation>
    <scope>NUCLEOTIDE SEQUENCE [LARGE SCALE GENOMIC DNA]</scope>
    <source>
        <strain>C57BL/6J</strain>
    </source>
</reference>
<reference key="3">
    <citation type="journal article" date="2004" name="Genome Res.">
        <title>The status, quality, and expansion of the NIH full-length cDNA project: the Mammalian Gene Collection (MGC).</title>
        <authorList>
            <consortium name="The MGC Project Team"/>
        </authorList>
    </citation>
    <scope>NUCLEOTIDE SEQUENCE [LARGE SCALE MRNA]</scope>
    <source>
        <tissue>Brain</tissue>
    </source>
</reference>
<reference key="4">
    <citation type="journal article" date="2012" name="Cell">
        <title>A thrombospondin-dependent pathway for a protective ER stress response.</title>
        <authorList>
            <person name="Lynch J.M."/>
            <person name="Maillet M."/>
            <person name="Vanhoutte D."/>
            <person name="Schloemer A."/>
            <person name="Sargent M.A."/>
            <person name="Blair N.S."/>
            <person name="Lynch K.A."/>
            <person name="Okada T."/>
            <person name="Aronow B.J."/>
            <person name="Osinska H."/>
            <person name="Prywes R."/>
            <person name="Lorenz J.N."/>
            <person name="Mori K."/>
            <person name="Lawler J."/>
            <person name="Robbins J."/>
            <person name="Molkentin J.D."/>
        </authorList>
    </citation>
    <scope>INTERACTION WITH THBS1 AND THBS4</scope>
    <scope>SUBCELLULAR LOCATION</scope>
</reference>
<reference key="5">
    <citation type="journal article" date="2015" name="Nat. Genet.">
        <title>Mutations in the unfolded protein response regulator ATF6 cause the cone dysfunction disorder achromatopsia.</title>
        <authorList>
            <person name="Kohl S."/>
            <person name="Zobor D."/>
            <person name="Chiang W.C."/>
            <person name="Weisschuh N."/>
            <person name="Staller J."/>
            <person name="Gonzalez Menendez I."/>
            <person name="Chang S."/>
            <person name="Beck S.C."/>
            <person name="Garcia Garrido M."/>
            <person name="Sothilingam V."/>
            <person name="Seeliger M.W."/>
            <person name="Stanzial F."/>
            <person name="Benedicenti F."/>
            <person name="Inzana F."/>
            <person name="Heon E."/>
            <person name="Vincent A."/>
            <person name="Beis J."/>
            <person name="Strom T.M."/>
            <person name="Rudolph G."/>
            <person name="Roosing S."/>
            <person name="Hollander A.I."/>
            <person name="Cremers F.P."/>
            <person name="Lopez I."/>
            <person name="Ren H."/>
            <person name="Moore A.T."/>
            <person name="Webster A.R."/>
            <person name="Michaelides M."/>
            <person name="Koenekoop R.K."/>
            <person name="Zrenner E."/>
            <person name="Kaufman R.J."/>
            <person name="Tsang S.H."/>
            <person name="Wissinger B."/>
            <person name="Lin J.H."/>
        </authorList>
    </citation>
    <scope>DISRUPTION PHENOTYPE</scope>
</reference>
<protein>
    <recommendedName>
        <fullName>Cyclic AMP-dependent transcription factor ATF-6 alpha</fullName>
        <shortName>cAMP-dependent transcription factor ATF-6 alpha</shortName>
    </recommendedName>
    <alternativeName>
        <fullName>Activating transcription factor 6 alpha</fullName>
        <shortName>ATF6-alpha</shortName>
    </alternativeName>
    <component>
        <recommendedName>
            <fullName>Processed cyclic AMP-dependent transcription factor ATF-6 alpha</fullName>
        </recommendedName>
    </component>
</protein>
<comment type="function">
    <molecule>Cyclic AMP-dependent transcription factor ATF-6 alpha</molecule>
    <text evidence="1">Precursor of the transcription factor form (Processed cyclic AMP-dependent transcription factor ATF-6 alpha), which is embedded in the endoplasmic reticulum membrane. Endoplasmic reticulum stress promotes processing of this form, releasing the transcription factor form that translocates into the nucleus, where it activates transcription of genes involved in the unfolded protein response (UPR).</text>
</comment>
<comment type="function">
    <molecule>Processed cyclic AMP-dependent transcription factor ATF-6 alpha</molecule>
    <text evidence="1">Transcription factor that initiates the unfolded protein response (UPR) during endoplasmic reticulum stress by activating transcription of genes involved in the UPR. Binds DNA on the 5'-CCAC[GA]-3'half of the ER stress response element (ERSE) (5'-CCAAT-N(9)-CCAC[GA]-3') and of ERSE II (5'-ATTGG-N-CCACG-3'). Binding to ERSE requires binding of NF-Y to ERSE. Could also be involved in activation of transcription by the serum response factor. May play a role in foveal development and cone function in the retina.</text>
</comment>
<comment type="subunit">
    <text evidence="1">Interacts with XBP1 isoform 2; the interaction occurs in a ER stress-dependent manner. Interacts with LACC1.</text>
</comment>
<comment type="subunit">
    <molecule>Cyclic AMP-dependent transcription factor ATF-6 alpha</molecule>
    <text evidence="5">Interacts with THBS4 (via EGF-like 3; calcium-binding domain) which facilitates its processing, activation and nuclear translocation (PubMed:22682248). Interacts (via lumenal domain) with THBS1 (PubMed:22682248).</text>
</comment>
<comment type="subunit">
    <molecule>Processed cyclic AMP-dependent transcription factor ATF-6 alpha</molecule>
    <text evidence="1">Homodimer and heterodimer with ATF6-beta. The dimer interacts with the nuclear transcription factor Y (NF-Y) trimer through direct binding to NF-Y subunit C (NF-YC). Also interacts with the transcription factors GTF2I, YY1 and SRF.</text>
</comment>
<comment type="interaction">
    <interactant intactId="EBI-6171558">
        <id>F6VAN0</id>
    </interactant>
    <interactant intactId="EBI-8018890">
        <id>Q3U182</id>
        <label>Crtc2</label>
    </interactant>
    <organismsDiffer>false</organismsDiffer>
    <experiments>2</experiments>
</comment>
<comment type="interaction">
    <interactant intactId="EBI-6171558">
        <id>F6VAN0</id>
    </interactant>
    <interactant intactId="EBI-6171531">
        <id>Q9Z1T2</id>
        <label>Thbs4</label>
    </interactant>
    <organismsDiffer>false</organismsDiffer>
    <experiments>3</experiments>
</comment>
<comment type="subcellular location">
    <subcellularLocation>
        <location evidence="5">Endoplasmic reticulum membrane</location>
        <topology evidence="2">Single-pass type II membrane protein</topology>
    </subcellularLocation>
    <subcellularLocation>
        <location evidence="1">Golgi apparatus membrane</location>
        <topology evidence="2">Single-pass type II membrane protein</topology>
    </subcellularLocation>
    <text evidence="1">Translocates from the endoplasmic reticulum to the Golgi, where it is processed.</text>
</comment>
<comment type="subcellular location">
    <molecule>Processed cyclic AMP-dependent transcription factor ATF-6 alpha</molecule>
    <subcellularLocation>
        <location evidence="5">Nucleus</location>
    </subcellularLocation>
    <text evidence="5">Under ER stress the cleaved N-terminal cytoplasmic domain translocates into the nucleus (PubMed:22682248). THBS4 promotes its nuclear shuttling (PubMed:22682248).</text>
</comment>
<comment type="domain">
    <text evidence="1">The basic domain functions as a nuclear localization signal.</text>
</comment>
<comment type="domain">
    <text evidence="1">The basic leucine-zipper domain is sufficient for association with the NF-Y trimer and binding to ERSE.</text>
</comment>
<comment type="PTM">
    <text evidence="1">During unfolded protein response, a fragment of approximately 50 kDa containing the cytoplasmic transcription factor domain is released by proteolysis. The cleavage seems to be performed sequentially by site-1 (MBTPS1, S1P) and site-2 (MBTPS2, S2P) proteases (By similarity).</text>
</comment>
<comment type="PTM">
    <text evidence="1">N-glycosylated; in its luminal domain (By similarity). The glycosylation status may serve as a sensor for ER homeostasis, resulting in ATF6 activation to trigger the unfolded protein response (UPR) (By similarity).</text>
</comment>
<comment type="PTM">
    <text evidence="1">Ubiquitinated by RNF186 at Lys-139, which is required for pattern recognition receptor-induced unfolded protein response-associated outcomes.</text>
</comment>
<comment type="disruption phenotype">
    <text evidence="6">Animals have normal retinal morphology and function at a young age but develop rod and cone dysfunction with increasing age.</text>
</comment>
<comment type="similarity">
    <text evidence="7">Belongs to the bZIP family. ATF subfamily.</text>
</comment>
<comment type="sequence caution" evidence="7">
    <conflict type="erroneous initiation">
        <sequence resource="EMBL-CDS" id="BAC29389"/>
    </conflict>
    <text>Extended N-terminus.</text>
</comment>
<name>ATF6A_MOUSE</name>
<organism>
    <name type="scientific">Mus musculus</name>
    <name type="common">Mouse</name>
    <dbReference type="NCBI Taxonomy" id="10090"/>
    <lineage>
        <taxon>Eukaryota</taxon>
        <taxon>Metazoa</taxon>
        <taxon>Chordata</taxon>
        <taxon>Craniata</taxon>
        <taxon>Vertebrata</taxon>
        <taxon>Euteleostomi</taxon>
        <taxon>Mammalia</taxon>
        <taxon>Eutheria</taxon>
        <taxon>Euarchontoglires</taxon>
        <taxon>Glires</taxon>
        <taxon>Rodentia</taxon>
        <taxon>Myomorpha</taxon>
        <taxon>Muroidea</taxon>
        <taxon>Muridae</taxon>
        <taxon>Murinae</taxon>
        <taxon>Mus</taxon>
        <taxon>Mus</taxon>
    </lineage>
</organism>
<sequence length="656" mass="72694">MESPFSPVLPHGPDEDWESTLFAELGYFTDTDDVHFDAAHEAYENNFDHLNFDLDLMPWESDLWSPGSHFCSDMKAEPQPLSPASSSCSISSPRSTDSCSSTQHVPEELDLLSSSQSPLSLYGDSCNSPSSVEPLKEEKPVTGPGNKTEHGLTPKKKIQMSSKPSVQPKPLLLPAAPKTQTNASVPAKAIIIQTLPALMPLAKQQSIISIQPAPTKGQTVLLSQPTVVQLQSPAVLSSAQPVLAVTGGAAQLPNHVVNVLPAPVVSSPVNGKLSVTKPVLQSATRSMGSDIAVLRRQQRMIKNRESACQSRKKKKEYMLGLEARLKAALSENEQLKKENGSLKRQLDEVVSENQRLKVPSPKRRAVCVMIVLAFIMLNYGPMSMLEQESRRVKPSVSPANQRRHLLEFSAKEVKDTSDGDNQKDSYSYDHSVSNDKALMVLSEEPLLYMPPPPCQPLINTTESLRLNHELRGWVHRHEVERTKSRRMTNSQQKARILQGALEQGSNSQLMAVQYTETTSISRNSGSELQVYYASPGSYQGFFDAIRRRGDTFYVVSFRRDHLLLPATTHNKTTRPKMSIVLPAININDNVINGQDYEVMMQIDCQVMDTRILHIKSSSVPPYLRDHQRNQTSTFFGSPPTTTETTHVVSTIPESLQ</sequence>
<accession>F6VAN0</accession>
<accession>B2RU98</accession>
<accession>Q8BZ84</accession>
<gene>
    <name type="primary">Atf6</name>
</gene>
<proteinExistence type="evidence at protein level"/>
<feature type="chain" id="PRO_0000424336" description="Cyclic AMP-dependent transcription factor ATF-6 alpha">
    <location>
        <begin position="1"/>
        <end position="656"/>
    </location>
</feature>
<feature type="chain" id="PRO_0000424337" description="Processed cyclic AMP-dependent transcription factor ATF-6 alpha" evidence="1">
    <location>
        <begin position="1"/>
        <end status="unknown"/>
    </location>
</feature>
<feature type="topological domain" description="Cytoplasmic" evidence="2">
    <location>
        <begin position="1"/>
        <end position="377"/>
    </location>
</feature>
<feature type="transmembrane region" description="Helical; Signal-anchor for type II membrane protein" evidence="2">
    <location>
        <begin position="378"/>
        <end position="398"/>
    </location>
</feature>
<feature type="topological domain" description="Lumenal" evidence="2">
    <location>
        <begin position="399"/>
        <end position="656"/>
    </location>
</feature>
<feature type="domain" description="bZIP" evidence="3">
    <location>
        <begin position="293"/>
        <end position="356"/>
    </location>
</feature>
<feature type="region of interest" description="Transcription activation" evidence="7">
    <location>
        <begin position="1"/>
        <end position="137"/>
    </location>
</feature>
<feature type="region of interest" description="Disordered" evidence="4">
    <location>
        <begin position="75"/>
        <end position="169"/>
    </location>
</feature>
<feature type="region of interest" description="Basic motif">
    <location>
        <begin position="295"/>
        <end position="326"/>
    </location>
</feature>
<feature type="region of interest" description="Leucine-zipper">
    <location>
        <begin position="335"/>
        <end position="342"/>
    </location>
</feature>
<feature type="region of interest" description="Disordered" evidence="4">
    <location>
        <begin position="391"/>
        <end position="429"/>
    </location>
</feature>
<feature type="region of interest" description="Interaction with THBS4" evidence="5">
    <location>
        <begin position="455"/>
        <end position="575"/>
    </location>
</feature>
<feature type="region of interest" description="Disordered" evidence="4">
    <location>
        <begin position="632"/>
        <end position="656"/>
    </location>
</feature>
<feature type="compositionally biased region" description="Low complexity" evidence="4">
    <location>
        <begin position="78"/>
        <end position="101"/>
    </location>
</feature>
<feature type="compositionally biased region" description="Low complexity" evidence="4">
    <location>
        <begin position="111"/>
        <end position="121"/>
    </location>
</feature>
<feature type="compositionally biased region" description="Basic and acidic residues" evidence="4">
    <location>
        <begin position="404"/>
        <end position="427"/>
    </location>
</feature>
<feature type="compositionally biased region" description="Low complexity" evidence="4">
    <location>
        <begin position="632"/>
        <end position="650"/>
    </location>
</feature>
<feature type="site" description="Cleavage; by MBTPS1" evidence="1">
    <location>
        <begin position="406"/>
        <end position="407"/>
    </location>
</feature>
<feature type="glycosylation site" description="N-linked (GlcNAc...) asparagine" evidence="2">
    <location>
        <position position="459"/>
    </location>
</feature>
<feature type="glycosylation site" description="N-linked (GlcNAc...) asparagine" evidence="2">
    <location>
        <position position="570"/>
    </location>
</feature>
<feature type="glycosylation site" description="N-linked (GlcNAc...) asparagine" evidence="2">
    <location>
        <position position="629"/>
    </location>
</feature>
<feature type="cross-link" description="Glycyl lysine isopeptide (Lys-Gly) (interchain with G-Cter in SUMO2)" evidence="1">
    <location>
        <position position="75"/>
    </location>
</feature>
<feature type="cross-link" description="Glycyl lysine isopeptide (Lys-Gly) (interchain with G-Cter in ubiquitin)" evidence="1">
    <location>
        <position position="139"/>
    </location>
</feature>
<feature type="sequence conflict" description="In Ref. 3; AAI41029." evidence="7" ref="3">
    <original>V</original>
    <variation>I</variation>
    <location>
        <position position="141"/>
    </location>
</feature>
<feature type="sequence conflict" description="In Ref. 3; AAI41029." evidence="7" ref="3">
    <original>S</original>
    <variation>P</variation>
    <location>
        <position position="237"/>
    </location>
</feature>
<feature type="sequence conflict" description="In Ref. 1; BAC29389." evidence="7" ref="1">
    <original>L</original>
    <variation>P</variation>
    <location>
        <position position="441"/>
    </location>
</feature>
<evidence type="ECO:0000250" key="1">
    <source>
        <dbReference type="UniProtKB" id="P18850"/>
    </source>
</evidence>
<evidence type="ECO:0000255" key="2"/>
<evidence type="ECO:0000255" key="3">
    <source>
        <dbReference type="PROSITE-ProRule" id="PRU00978"/>
    </source>
</evidence>
<evidence type="ECO:0000256" key="4">
    <source>
        <dbReference type="SAM" id="MobiDB-lite"/>
    </source>
</evidence>
<evidence type="ECO:0000269" key="5">
    <source>
    </source>
</evidence>
<evidence type="ECO:0000269" key="6">
    <source>
    </source>
</evidence>
<evidence type="ECO:0000305" key="7"/>
<dbReference type="EMBL" id="AK036335">
    <property type="protein sequence ID" value="BAC29389.1"/>
    <property type="status" value="ALT_INIT"/>
    <property type="molecule type" value="mRNA"/>
</dbReference>
<dbReference type="EMBL" id="AC113490">
    <property type="status" value="NOT_ANNOTATED_CDS"/>
    <property type="molecule type" value="Genomic_DNA"/>
</dbReference>
<dbReference type="EMBL" id="AC125021">
    <property type="status" value="NOT_ANNOTATED_CDS"/>
    <property type="molecule type" value="Genomic_DNA"/>
</dbReference>
<dbReference type="EMBL" id="BC141028">
    <property type="protein sequence ID" value="AAI41029.1"/>
    <property type="molecule type" value="mRNA"/>
</dbReference>
<dbReference type="CCDS" id="CCDS56653.1"/>
<dbReference type="RefSeq" id="NP_001074773.1">
    <property type="nucleotide sequence ID" value="NM_001081304.1"/>
</dbReference>
<dbReference type="RefSeq" id="XP_030109280.1">
    <property type="nucleotide sequence ID" value="XM_030253420.2"/>
</dbReference>
<dbReference type="SMR" id="F6VAN0"/>
<dbReference type="BioGRID" id="230540">
    <property type="interactions" value="5"/>
</dbReference>
<dbReference type="DIP" id="DIP-59768N"/>
<dbReference type="FunCoup" id="F6VAN0">
    <property type="interactions" value="3412"/>
</dbReference>
<dbReference type="IntAct" id="F6VAN0">
    <property type="interactions" value="4"/>
</dbReference>
<dbReference type="STRING" id="10090.ENSMUSP00000027974"/>
<dbReference type="GlyConnect" id="2243">
    <property type="glycosylation" value="2 N-Linked glycans (1 site)"/>
</dbReference>
<dbReference type="GlyCosmos" id="F6VAN0">
    <property type="glycosylation" value="3 sites, 2 glycans"/>
</dbReference>
<dbReference type="GlyGen" id="F6VAN0">
    <property type="glycosylation" value="4 sites, 5 N-linked glycans (3 sites)"/>
</dbReference>
<dbReference type="iPTMnet" id="F6VAN0"/>
<dbReference type="PhosphoSitePlus" id="F6VAN0"/>
<dbReference type="PaxDb" id="10090-ENSMUSP00000027974"/>
<dbReference type="PeptideAtlas" id="F6VAN0"/>
<dbReference type="ProteomicsDB" id="277213"/>
<dbReference type="Pumba" id="F6VAN0"/>
<dbReference type="Antibodypedia" id="20515">
    <property type="antibodies" value="642 antibodies from 45 providers"/>
</dbReference>
<dbReference type="DNASU" id="226641"/>
<dbReference type="Ensembl" id="ENSMUST00000027974.7">
    <property type="protein sequence ID" value="ENSMUSP00000027974.6"/>
    <property type="gene ID" value="ENSMUSG00000026663.7"/>
</dbReference>
<dbReference type="GeneID" id="226641"/>
<dbReference type="KEGG" id="mmu:226641"/>
<dbReference type="UCSC" id="uc007dmj.1">
    <property type="organism name" value="mouse"/>
</dbReference>
<dbReference type="AGR" id="MGI:1926157"/>
<dbReference type="CTD" id="22926"/>
<dbReference type="MGI" id="MGI:1926157">
    <property type="gene designation" value="Atf6"/>
</dbReference>
<dbReference type="VEuPathDB" id="HostDB:ENSMUSG00000026663"/>
<dbReference type="eggNOG" id="KOG4343">
    <property type="taxonomic scope" value="Eukaryota"/>
</dbReference>
<dbReference type="GeneTree" id="ENSGT00940000159221"/>
<dbReference type="HOGENOM" id="CLU_026136_1_0_1"/>
<dbReference type="InParanoid" id="F6VAN0"/>
<dbReference type="OMA" id="WSINNQF"/>
<dbReference type="OrthoDB" id="644067at2759"/>
<dbReference type="PhylomeDB" id="F6VAN0"/>
<dbReference type="TreeFam" id="TF316079"/>
<dbReference type="Reactome" id="R-MMU-381033">
    <property type="pathway name" value="ATF6 (ATF6-alpha) activates chaperones"/>
</dbReference>
<dbReference type="BioGRID-ORCS" id="226641">
    <property type="hits" value="2 hits in 80 CRISPR screens"/>
</dbReference>
<dbReference type="ChiTaRS" id="Atf6">
    <property type="organism name" value="mouse"/>
</dbReference>
<dbReference type="PRO" id="PR:F6VAN0"/>
<dbReference type="Proteomes" id="UP000000589">
    <property type="component" value="Chromosome 1"/>
</dbReference>
<dbReference type="RNAct" id="F6VAN0">
    <property type="molecule type" value="protein"/>
</dbReference>
<dbReference type="Bgee" id="ENSMUSG00000026663">
    <property type="expression patterns" value="Expressed in myocardium of ventricle and 251 other cell types or tissues"/>
</dbReference>
<dbReference type="GO" id="GO:0005783">
    <property type="term" value="C:endoplasmic reticulum"/>
    <property type="evidence" value="ECO:0000303"/>
    <property type="project" value="ParkinsonsUK-UCL"/>
</dbReference>
<dbReference type="GO" id="GO:0005789">
    <property type="term" value="C:endoplasmic reticulum membrane"/>
    <property type="evidence" value="ECO:0007669"/>
    <property type="project" value="UniProtKB-SubCell"/>
</dbReference>
<dbReference type="GO" id="GO:0000139">
    <property type="term" value="C:Golgi membrane"/>
    <property type="evidence" value="ECO:0007669"/>
    <property type="project" value="UniProtKB-SubCell"/>
</dbReference>
<dbReference type="GO" id="GO:0005634">
    <property type="term" value="C:nucleus"/>
    <property type="evidence" value="ECO:0000314"/>
    <property type="project" value="UniProtKB"/>
</dbReference>
<dbReference type="GO" id="GO:0090575">
    <property type="term" value="C:RNA polymerase II transcription regulator complex"/>
    <property type="evidence" value="ECO:0007669"/>
    <property type="project" value="Ensembl"/>
</dbReference>
<dbReference type="GO" id="GO:0001228">
    <property type="term" value="F:DNA-binding transcription activator activity, RNA polymerase II-specific"/>
    <property type="evidence" value="ECO:0007669"/>
    <property type="project" value="Ensembl"/>
</dbReference>
<dbReference type="GO" id="GO:0019899">
    <property type="term" value="F:enzyme binding"/>
    <property type="evidence" value="ECO:0007669"/>
    <property type="project" value="Ensembl"/>
</dbReference>
<dbReference type="GO" id="GO:0042802">
    <property type="term" value="F:identical protein binding"/>
    <property type="evidence" value="ECO:0007669"/>
    <property type="project" value="Ensembl"/>
</dbReference>
<dbReference type="GO" id="GO:0046982">
    <property type="term" value="F:protein heterodimerization activity"/>
    <property type="evidence" value="ECO:0007669"/>
    <property type="project" value="Ensembl"/>
</dbReference>
<dbReference type="GO" id="GO:0000978">
    <property type="term" value="F:RNA polymerase II cis-regulatory region sequence-specific DNA binding"/>
    <property type="evidence" value="ECO:0007669"/>
    <property type="project" value="Ensembl"/>
</dbReference>
<dbReference type="GO" id="GO:0000977">
    <property type="term" value="F:RNA polymerase II transcription regulatory region sequence-specific DNA binding"/>
    <property type="evidence" value="ECO:0000250"/>
    <property type="project" value="UniProtKB"/>
</dbReference>
<dbReference type="GO" id="GO:0001654">
    <property type="term" value="P:eye development"/>
    <property type="evidence" value="ECO:0000250"/>
    <property type="project" value="UniProtKB"/>
</dbReference>
<dbReference type="GO" id="GO:0043065">
    <property type="term" value="P:positive regulation of apoptotic process"/>
    <property type="evidence" value="ECO:0007669"/>
    <property type="project" value="Ensembl"/>
</dbReference>
<dbReference type="GO" id="GO:1903893">
    <property type="term" value="P:positive regulation of ATF6-mediated unfolded protein response"/>
    <property type="evidence" value="ECO:0007669"/>
    <property type="project" value="Ensembl"/>
</dbReference>
<dbReference type="GO" id="GO:0010508">
    <property type="term" value="P:positive regulation of autophagy"/>
    <property type="evidence" value="ECO:0000266"/>
    <property type="project" value="MGI"/>
</dbReference>
<dbReference type="GO" id="GO:0045944">
    <property type="term" value="P:positive regulation of transcription by RNA polymerase II"/>
    <property type="evidence" value="ECO:0000314"/>
    <property type="project" value="MGI"/>
</dbReference>
<dbReference type="GO" id="GO:0034976">
    <property type="term" value="P:response to endoplasmic reticulum stress"/>
    <property type="evidence" value="ECO:0007669"/>
    <property type="project" value="Ensembl"/>
</dbReference>
<dbReference type="GO" id="GO:0006986">
    <property type="term" value="P:response to unfolded protein"/>
    <property type="evidence" value="ECO:0007669"/>
    <property type="project" value="UniProtKB-KW"/>
</dbReference>
<dbReference type="GO" id="GO:0007601">
    <property type="term" value="P:visual perception"/>
    <property type="evidence" value="ECO:0000250"/>
    <property type="project" value="UniProtKB"/>
</dbReference>
<dbReference type="CDD" id="cd14700">
    <property type="entry name" value="bZIP_ATF6"/>
    <property type="match status" value="1"/>
</dbReference>
<dbReference type="FunFam" id="1.20.5.170:FF:000041">
    <property type="entry name" value="Cyclic AMP-dependent transcription factor ATF-6 beta"/>
    <property type="match status" value="1"/>
</dbReference>
<dbReference type="Gene3D" id="1.20.5.170">
    <property type="match status" value="1"/>
</dbReference>
<dbReference type="InterPro" id="IPR051882">
    <property type="entry name" value="ATF_bZIP_TF"/>
</dbReference>
<dbReference type="InterPro" id="IPR004827">
    <property type="entry name" value="bZIP"/>
</dbReference>
<dbReference type="InterPro" id="IPR046347">
    <property type="entry name" value="bZIP_sf"/>
</dbReference>
<dbReference type="PANTHER" id="PTHR46164">
    <property type="entry name" value="ATF6, ISOFORM C"/>
    <property type="match status" value="1"/>
</dbReference>
<dbReference type="PANTHER" id="PTHR46164:SF1">
    <property type="entry name" value="CYCLIC AMP-DEPENDENT TRANSCRIPTION FACTOR ATF-6 ALPHA"/>
    <property type="match status" value="1"/>
</dbReference>
<dbReference type="Pfam" id="PF00170">
    <property type="entry name" value="bZIP_1"/>
    <property type="match status" value="1"/>
</dbReference>
<dbReference type="SMART" id="SM00338">
    <property type="entry name" value="BRLZ"/>
    <property type="match status" value="1"/>
</dbReference>
<dbReference type="SUPFAM" id="SSF57959">
    <property type="entry name" value="Leucine zipper domain"/>
    <property type="match status" value="1"/>
</dbReference>
<dbReference type="PROSITE" id="PS50217">
    <property type="entry name" value="BZIP"/>
    <property type="match status" value="1"/>
</dbReference>
<dbReference type="PROSITE" id="PS00036">
    <property type="entry name" value="BZIP_BASIC"/>
    <property type="match status" value="1"/>
</dbReference>
<keyword id="KW-0010">Activator</keyword>
<keyword id="KW-0238">DNA-binding</keyword>
<keyword id="KW-0256">Endoplasmic reticulum</keyword>
<keyword id="KW-0325">Glycoprotein</keyword>
<keyword id="KW-0333">Golgi apparatus</keyword>
<keyword id="KW-1017">Isopeptide bond</keyword>
<keyword id="KW-0472">Membrane</keyword>
<keyword id="KW-0539">Nucleus</keyword>
<keyword id="KW-1185">Reference proteome</keyword>
<keyword id="KW-0735">Signal-anchor</keyword>
<keyword id="KW-0804">Transcription</keyword>
<keyword id="KW-0805">Transcription regulation</keyword>
<keyword id="KW-0812">Transmembrane</keyword>
<keyword id="KW-1133">Transmembrane helix</keyword>
<keyword id="KW-0832">Ubl conjugation</keyword>
<keyword id="KW-0834">Unfolded protein response</keyword>